<organism>
    <name type="scientific">Arabidopsis thaliana</name>
    <name type="common">Mouse-ear cress</name>
    <dbReference type="NCBI Taxonomy" id="3702"/>
    <lineage>
        <taxon>Eukaryota</taxon>
        <taxon>Viridiplantae</taxon>
        <taxon>Streptophyta</taxon>
        <taxon>Embryophyta</taxon>
        <taxon>Tracheophyta</taxon>
        <taxon>Spermatophyta</taxon>
        <taxon>Magnoliopsida</taxon>
        <taxon>eudicotyledons</taxon>
        <taxon>Gunneridae</taxon>
        <taxon>Pentapetalae</taxon>
        <taxon>rosids</taxon>
        <taxon>malvids</taxon>
        <taxon>Brassicales</taxon>
        <taxon>Brassicaceae</taxon>
        <taxon>Camelineae</taxon>
        <taxon>Arabidopsis</taxon>
    </lineage>
</organism>
<evidence type="ECO:0000250" key="1"/>
<evidence type="ECO:0000250" key="2">
    <source>
        <dbReference type="UniProtKB" id="B2HS63"/>
    </source>
</evidence>
<evidence type="ECO:0000305" key="3"/>
<dbReference type="EC" id="3.2.2.n1"/>
<dbReference type="EMBL" id="AF149413">
    <property type="protein sequence ID" value="AAD40141.1"/>
    <property type="molecule type" value="Genomic_DNA"/>
</dbReference>
<dbReference type="EMBL" id="CP002688">
    <property type="status" value="NOT_ANNOTATED_CDS"/>
    <property type="molecule type" value="Genomic_DNA"/>
</dbReference>
<dbReference type="SMR" id="Q9XH06"/>
<dbReference type="STRING" id="3702.Q9XH06"/>
<dbReference type="PaxDb" id="3702-AT5G26140.1"/>
<dbReference type="Araport" id="AT5G26140"/>
<dbReference type="TAIR" id="AT5G26140">
    <property type="gene designation" value="LOG9"/>
</dbReference>
<dbReference type="eggNOG" id="ENOG502QTZZ">
    <property type="taxonomic scope" value="Eukaryota"/>
</dbReference>
<dbReference type="HOGENOM" id="CLU_058336_2_2_1"/>
<dbReference type="InParanoid" id="Q9XH06"/>
<dbReference type="PhylomeDB" id="Q9XH06"/>
<dbReference type="PRO" id="PR:Q9XH06"/>
<dbReference type="Proteomes" id="UP000006548">
    <property type="component" value="Chromosome 5"/>
</dbReference>
<dbReference type="ExpressionAtlas" id="Q9XH06">
    <property type="expression patterns" value="baseline and differential"/>
</dbReference>
<dbReference type="GO" id="GO:0005829">
    <property type="term" value="C:cytosol"/>
    <property type="evidence" value="ECO:0000318"/>
    <property type="project" value="GO_Central"/>
</dbReference>
<dbReference type="GO" id="GO:0005634">
    <property type="term" value="C:nucleus"/>
    <property type="evidence" value="ECO:0000318"/>
    <property type="project" value="GO_Central"/>
</dbReference>
<dbReference type="GO" id="GO:0102682">
    <property type="term" value="F:cytokinin riboside 5'-monophosphate phosphoribohydrolase activity"/>
    <property type="evidence" value="ECO:0000318"/>
    <property type="project" value="GO_Central"/>
</dbReference>
<dbReference type="GO" id="GO:0009691">
    <property type="term" value="P:cytokinin biosynthetic process"/>
    <property type="evidence" value="ECO:0000318"/>
    <property type="project" value="GO_Central"/>
</dbReference>
<dbReference type="Gene3D" id="3.40.50.450">
    <property type="match status" value="1"/>
</dbReference>
<dbReference type="InterPro" id="IPR031100">
    <property type="entry name" value="LOG_fam"/>
</dbReference>
<dbReference type="PANTHER" id="PTHR31223:SF11">
    <property type="entry name" value="CYTOKININ RIBOSIDE 5'-MONOPHOSPHATE PHOSPHORIBOHYDROLASE LOG8-RELATED"/>
    <property type="match status" value="1"/>
</dbReference>
<dbReference type="PANTHER" id="PTHR31223">
    <property type="entry name" value="LOG FAMILY PROTEIN YJL055W"/>
    <property type="match status" value="1"/>
</dbReference>
<dbReference type="Pfam" id="PF03641">
    <property type="entry name" value="Lysine_decarbox"/>
    <property type="match status" value="1"/>
</dbReference>
<dbReference type="SUPFAM" id="SSF102405">
    <property type="entry name" value="MCP/YpsA-like"/>
    <property type="match status" value="1"/>
</dbReference>
<sequence>MHIEHISGETVGEVRIVSDMHERKATMAQEAGAFIALLGERYETMEELLEMITWAQLGIHKKTVGLLNVDGYYNNLLAFFDTGVEEGFIKQGACNIVVSAPSARELMEKMELYTPSHKYIASHQSWKVEPLGDYPLLNENKPQ</sequence>
<accession>Q9XH06</accession>
<protein>
    <recommendedName>
        <fullName>Putative cytokinin riboside 5'-monophosphate phosphoribohydrolase LOG9</fullName>
        <ecNumber>3.2.2.n1</ecNumber>
    </recommendedName>
    <alternativeName>
        <fullName>Protein LONELY GUY 9</fullName>
    </alternativeName>
</protein>
<proteinExistence type="inferred from homology"/>
<reference key="1">
    <citation type="journal article" date="2000" name="Nature">
        <title>Sequence and analysis of chromosome 5 of the plant Arabidopsis thaliana.</title>
        <authorList>
            <person name="Tabata S."/>
            <person name="Kaneko T."/>
            <person name="Nakamura Y."/>
            <person name="Kotani H."/>
            <person name="Kato T."/>
            <person name="Asamizu E."/>
            <person name="Miyajima N."/>
            <person name="Sasamoto S."/>
            <person name="Kimura T."/>
            <person name="Hosouchi T."/>
            <person name="Kawashima K."/>
            <person name="Kohara M."/>
            <person name="Matsumoto M."/>
            <person name="Matsuno A."/>
            <person name="Muraki A."/>
            <person name="Nakayama S."/>
            <person name="Nakazaki N."/>
            <person name="Naruo K."/>
            <person name="Okumura S."/>
            <person name="Shinpo S."/>
            <person name="Takeuchi C."/>
            <person name="Wada T."/>
            <person name="Watanabe A."/>
            <person name="Yamada M."/>
            <person name="Yasuda M."/>
            <person name="Sato S."/>
            <person name="de la Bastide M."/>
            <person name="Huang E."/>
            <person name="Spiegel L."/>
            <person name="Gnoj L."/>
            <person name="O'Shaughnessy A."/>
            <person name="Preston R."/>
            <person name="Habermann K."/>
            <person name="Murray J."/>
            <person name="Johnson D."/>
            <person name="Rohlfing T."/>
            <person name="Nelson J."/>
            <person name="Stoneking T."/>
            <person name="Pepin K."/>
            <person name="Spieth J."/>
            <person name="Sekhon M."/>
            <person name="Armstrong J."/>
            <person name="Becker M."/>
            <person name="Belter E."/>
            <person name="Cordum H."/>
            <person name="Cordes M."/>
            <person name="Courtney L."/>
            <person name="Courtney W."/>
            <person name="Dante M."/>
            <person name="Du H."/>
            <person name="Edwards J."/>
            <person name="Fryman J."/>
            <person name="Haakensen B."/>
            <person name="Lamar E."/>
            <person name="Latreille P."/>
            <person name="Leonard S."/>
            <person name="Meyer R."/>
            <person name="Mulvaney E."/>
            <person name="Ozersky P."/>
            <person name="Riley A."/>
            <person name="Strowmatt C."/>
            <person name="Wagner-McPherson C."/>
            <person name="Wollam A."/>
            <person name="Yoakum M."/>
            <person name="Bell M."/>
            <person name="Dedhia N."/>
            <person name="Parnell L."/>
            <person name="Shah R."/>
            <person name="Rodriguez M."/>
            <person name="Hoon See L."/>
            <person name="Vil D."/>
            <person name="Baker J."/>
            <person name="Kirchoff K."/>
            <person name="Toth K."/>
            <person name="King L."/>
            <person name="Bahret A."/>
            <person name="Miller B."/>
            <person name="Marra M.A."/>
            <person name="Martienssen R."/>
            <person name="McCombie W.R."/>
            <person name="Wilson R.K."/>
            <person name="Murphy G."/>
            <person name="Bancroft I."/>
            <person name="Volckaert G."/>
            <person name="Wambutt R."/>
            <person name="Duesterhoeft A."/>
            <person name="Stiekema W."/>
            <person name="Pohl T."/>
            <person name="Entian K.-D."/>
            <person name="Terryn N."/>
            <person name="Hartley N."/>
            <person name="Bent E."/>
            <person name="Johnson S."/>
            <person name="Langham S.-A."/>
            <person name="McCullagh B."/>
            <person name="Robben J."/>
            <person name="Grymonprez B."/>
            <person name="Zimmermann W."/>
            <person name="Ramsperger U."/>
            <person name="Wedler H."/>
            <person name="Balke K."/>
            <person name="Wedler E."/>
            <person name="Peters S."/>
            <person name="van Staveren M."/>
            <person name="Dirkse W."/>
            <person name="Mooijman P."/>
            <person name="Klein Lankhorst R."/>
            <person name="Weitzenegger T."/>
            <person name="Bothe G."/>
            <person name="Rose M."/>
            <person name="Hauf J."/>
            <person name="Berneiser S."/>
            <person name="Hempel S."/>
            <person name="Feldpausch M."/>
            <person name="Lamberth S."/>
            <person name="Villarroel R."/>
            <person name="Gielen J."/>
            <person name="Ardiles W."/>
            <person name="Bents O."/>
            <person name="Lemcke K."/>
            <person name="Kolesov G."/>
            <person name="Mayer K.F.X."/>
            <person name="Rudd S."/>
            <person name="Schoof H."/>
            <person name="Schueller C."/>
            <person name="Zaccaria P."/>
            <person name="Mewes H.-W."/>
            <person name="Bevan M."/>
            <person name="Fransz P.F."/>
        </authorList>
    </citation>
    <scope>NUCLEOTIDE SEQUENCE [LARGE SCALE GENOMIC DNA]</scope>
    <source>
        <strain>cv. Columbia</strain>
    </source>
</reference>
<reference key="2">
    <citation type="journal article" date="2017" name="Plant J.">
        <title>Araport11: a complete reannotation of the Arabidopsis thaliana reference genome.</title>
        <authorList>
            <person name="Cheng C.Y."/>
            <person name="Krishnakumar V."/>
            <person name="Chan A.P."/>
            <person name="Thibaud-Nissen F."/>
            <person name="Schobel S."/>
            <person name="Town C.D."/>
        </authorList>
    </citation>
    <scope>GENOME REANNOTATION</scope>
    <source>
        <strain>cv. Columbia</strain>
    </source>
</reference>
<reference key="3">
    <citation type="journal article" date="2007" name="Nature">
        <title>Direct control of shoot meristem activity by a cytokinin-activating enzyme.</title>
        <authorList>
            <person name="Kurakawa T."/>
            <person name="Ueda N."/>
            <person name="Maekawa M."/>
            <person name="Kobayashi K."/>
            <person name="Kojima M."/>
            <person name="Nagato Y."/>
            <person name="Sakakibara H."/>
            <person name="Kyozuka J."/>
        </authorList>
    </citation>
    <scope>IDENTIFICATION</scope>
</reference>
<reference key="4">
    <citation type="journal article" date="2009" name="Plant Cell">
        <title>Functional analyses of LONELY GUY cytokinin-activating enzymes reveal the importance of the direct activation pathway in Arabidopsis.</title>
        <authorList>
            <person name="Kuroha T."/>
            <person name="Tokunaga H."/>
            <person name="Kojima M."/>
            <person name="Ueda N."/>
            <person name="Ishida T."/>
            <person name="Nagawa S."/>
            <person name="Fukuda H."/>
            <person name="Sugimoto K."/>
            <person name="Sakakibara H."/>
        </authorList>
    </citation>
    <scope>GENE FAMILY</scope>
    <scope>NOMENCLATURE</scope>
</reference>
<feature type="chain" id="PRO_0000395051" description="Putative cytokinin riboside 5'-monophosphate phosphoribohydrolase LOG9">
    <location>
        <begin position="1"/>
        <end position="143"/>
    </location>
</feature>
<feature type="binding site" evidence="2">
    <location>
        <begin position="23"/>
        <end position="24"/>
    </location>
    <ligand>
        <name>substrate</name>
    </ligand>
</feature>
<feature type="binding site" evidence="2">
    <location>
        <begin position="41"/>
        <end position="47"/>
    </location>
    <ligand>
        <name>substrate</name>
    </ligand>
</feature>
<feature type="binding site" evidence="2">
    <location>
        <position position="53"/>
    </location>
    <ligand>
        <name>substrate</name>
    </ligand>
</feature>
<keyword id="KW-0203">Cytokinin biosynthesis</keyword>
<keyword id="KW-0378">Hydrolase</keyword>
<keyword id="KW-1185">Reference proteome</keyword>
<gene>
    <name type="primary">LOG9</name>
    <name type="ordered locus">At5g26140</name>
    <name type="ORF">T1N24.16</name>
</gene>
<name>LOG9_ARATH</name>
<comment type="function">
    <text evidence="1">Cytokinin-activating enzyme working in the direct activation pathway. Phosphoribohydrolase that converts inactive cytokinin nucleotides to the biologically active free-base forms (By similarity).</text>
</comment>
<comment type="catalytic activity">
    <reaction>
        <text>N(6)-(dimethylallyl)adenosine 5'-phosphate + H2O = N(6)-dimethylallyladenine + D-ribose 5-phosphate</text>
        <dbReference type="Rhea" id="RHEA:48560"/>
        <dbReference type="ChEBI" id="CHEBI:15377"/>
        <dbReference type="ChEBI" id="CHEBI:17660"/>
        <dbReference type="ChEBI" id="CHEBI:57526"/>
        <dbReference type="ChEBI" id="CHEBI:78346"/>
        <dbReference type="EC" id="3.2.2.n1"/>
    </reaction>
</comment>
<comment type="catalytic activity">
    <reaction>
        <text>9-ribosyl-trans-zeatin 5'-phosphate + H2O = trans-zeatin + D-ribose 5-phosphate</text>
        <dbReference type="Rhea" id="RHEA:48564"/>
        <dbReference type="ChEBI" id="CHEBI:15377"/>
        <dbReference type="ChEBI" id="CHEBI:16522"/>
        <dbReference type="ChEBI" id="CHEBI:78346"/>
        <dbReference type="ChEBI" id="CHEBI:87947"/>
        <dbReference type="EC" id="3.2.2.n1"/>
    </reaction>
</comment>
<comment type="similarity">
    <text evidence="3">Belongs to the LOG family.</text>
</comment>